<sequence>MSKVLVTGFGPYGVTPVNPAQLTAEELDGRTIAGATVISRIVPNTFFESIAAAQQAIAEIEPALVIMLGEYPGRSMITVERLAQNVNDCGRYGLADCAGRVLVGEPTDPAGPVAYHATVPVRAMVLAMRKAGVPADVSDAAGTFVCNHLMYGVLHHLAQKGLPVRAGWIHLPCLPSVAALDHNLGVPSMSVQTAVAGVTAGIEAAIRQSADIREPIPSRLQI</sequence>
<feature type="chain" id="PRO_1000192223" description="Pyrrolidone-carboxylate peptidase">
    <location>
        <begin position="1"/>
        <end position="222"/>
    </location>
</feature>
<feature type="active site" evidence="1">
    <location>
        <position position="80"/>
    </location>
</feature>
<feature type="active site" evidence="1">
    <location>
        <position position="146"/>
    </location>
</feature>
<feature type="active site" evidence="1">
    <location>
        <position position="170"/>
    </location>
</feature>
<comment type="function">
    <text evidence="1">Removes 5-oxoproline from various penultimate amino acid residues except L-proline.</text>
</comment>
<comment type="catalytic activity">
    <reaction evidence="1">
        <text>Release of an N-terminal pyroglutamyl group from a polypeptide, the second amino acid generally not being Pro.</text>
        <dbReference type="EC" id="3.4.19.3"/>
    </reaction>
</comment>
<comment type="subunit">
    <text evidence="1">Homotetramer.</text>
</comment>
<comment type="subcellular location">
    <subcellularLocation>
        <location evidence="1">Cytoplasm</location>
    </subcellularLocation>
</comment>
<comment type="similarity">
    <text evidence="1">Belongs to the peptidase C15 family.</text>
</comment>
<evidence type="ECO:0000255" key="1">
    <source>
        <dbReference type="HAMAP-Rule" id="MF_00417"/>
    </source>
</evidence>
<protein>
    <recommendedName>
        <fullName evidence="1">Pyrrolidone-carboxylate peptidase</fullName>
        <ecNumber evidence="1">3.4.19.3</ecNumber>
    </recommendedName>
    <alternativeName>
        <fullName evidence="1">5-oxoprolyl-peptidase</fullName>
    </alternativeName>
    <alternativeName>
        <fullName evidence="1">Pyroglutamyl-peptidase I</fullName>
        <shortName evidence="1">PGP-I</shortName>
        <shortName evidence="1">Pyrase</shortName>
    </alternativeName>
</protein>
<keyword id="KW-0963">Cytoplasm</keyword>
<keyword id="KW-0378">Hydrolase</keyword>
<keyword id="KW-0645">Protease</keyword>
<keyword id="KW-0788">Thiol protease</keyword>
<dbReference type="EC" id="3.4.19.3" evidence="1"/>
<dbReference type="EMBL" id="AP010918">
    <property type="protein sequence ID" value="BAH24626.1"/>
    <property type="molecule type" value="Genomic_DNA"/>
</dbReference>
<dbReference type="RefSeq" id="WP_003401632.1">
    <property type="nucleotide sequence ID" value="NZ_CP014566.1"/>
</dbReference>
<dbReference type="SMR" id="C1AJZ7"/>
<dbReference type="MEROPS" id="C15.001"/>
<dbReference type="GeneID" id="45424287"/>
<dbReference type="KEGG" id="mbt:JTY_0329"/>
<dbReference type="HOGENOM" id="CLU_043960_4_3_11"/>
<dbReference type="GO" id="GO:0005829">
    <property type="term" value="C:cytosol"/>
    <property type="evidence" value="ECO:0007669"/>
    <property type="project" value="InterPro"/>
</dbReference>
<dbReference type="GO" id="GO:0016920">
    <property type="term" value="F:pyroglutamyl-peptidase activity"/>
    <property type="evidence" value="ECO:0007669"/>
    <property type="project" value="UniProtKB-UniRule"/>
</dbReference>
<dbReference type="GO" id="GO:0006508">
    <property type="term" value="P:proteolysis"/>
    <property type="evidence" value="ECO:0007669"/>
    <property type="project" value="UniProtKB-KW"/>
</dbReference>
<dbReference type="CDD" id="cd00501">
    <property type="entry name" value="Peptidase_C15"/>
    <property type="match status" value="1"/>
</dbReference>
<dbReference type="Gene3D" id="3.40.630.20">
    <property type="entry name" value="Peptidase C15, pyroglutamyl peptidase I-like"/>
    <property type="match status" value="1"/>
</dbReference>
<dbReference type="HAMAP" id="MF_00417">
    <property type="entry name" value="Pyrrolid_peptidase"/>
    <property type="match status" value="1"/>
</dbReference>
<dbReference type="InterPro" id="IPR000816">
    <property type="entry name" value="Peptidase_C15"/>
</dbReference>
<dbReference type="InterPro" id="IPR016125">
    <property type="entry name" value="Peptidase_C15-like"/>
</dbReference>
<dbReference type="InterPro" id="IPR036440">
    <property type="entry name" value="Peptidase_C15-like_sf"/>
</dbReference>
<dbReference type="InterPro" id="IPR029762">
    <property type="entry name" value="PGP-I_bact-type"/>
</dbReference>
<dbReference type="InterPro" id="IPR033694">
    <property type="entry name" value="PGPEP1_Cys_AS"/>
</dbReference>
<dbReference type="InterPro" id="IPR033693">
    <property type="entry name" value="PGPEP1_Glu_AS"/>
</dbReference>
<dbReference type="NCBIfam" id="NF009674">
    <property type="entry name" value="PRK13195.1"/>
    <property type="match status" value="1"/>
</dbReference>
<dbReference type="NCBIfam" id="NF009676">
    <property type="entry name" value="PRK13197.1"/>
    <property type="match status" value="1"/>
</dbReference>
<dbReference type="NCBIfam" id="TIGR00504">
    <property type="entry name" value="pyro_pdase"/>
    <property type="match status" value="1"/>
</dbReference>
<dbReference type="PANTHER" id="PTHR23402">
    <property type="entry name" value="PROTEASE FAMILY C15 PYROGLUTAMYL-PEPTIDASE I-RELATED"/>
    <property type="match status" value="1"/>
</dbReference>
<dbReference type="PANTHER" id="PTHR23402:SF1">
    <property type="entry name" value="PYROGLUTAMYL-PEPTIDASE I"/>
    <property type="match status" value="1"/>
</dbReference>
<dbReference type="Pfam" id="PF01470">
    <property type="entry name" value="Peptidase_C15"/>
    <property type="match status" value="1"/>
</dbReference>
<dbReference type="PIRSF" id="PIRSF015592">
    <property type="entry name" value="Prld-crbxl_pptds"/>
    <property type="match status" value="1"/>
</dbReference>
<dbReference type="PRINTS" id="PR00706">
    <property type="entry name" value="PYROGLUPTASE"/>
</dbReference>
<dbReference type="SUPFAM" id="SSF53182">
    <property type="entry name" value="Pyrrolidone carboxyl peptidase (pyroglutamate aminopeptidase)"/>
    <property type="match status" value="1"/>
</dbReference>
<dbReference type="PROSITE" id="PS01334">
    <property type="entry name" value="PYRASE_CYS"/>
    <property type="match status" value="1"/>
</dbReference>
<dbReference type="PROSITE" id="PS01333">
    <property type="entry name" value="PYRASE_GLU"/>
    <property type="match status" value="1"/>
</dbReference>
<organism>
    <name type="scientific">Mycobacterium bovis (strain BCG / Tokyo 172 / ATCC 35737 / TMC 1019)</name>
    <dbReference type="NCBI Taxonomy" id="561275"/>
    <lineage>
        <taxon>Bacteria</taxon>
        <taxon>Bacillati</taxon>
        <taxon>Actinomycetota</taxon>
        <taxon>Actinomycetes</taxon>
        <taxon>Mycobacteriales</taxon>
        <taxon>Mycobacteriaceae</taxon>
        <taxon>Mycobacterium</taxon>
        <taxon>Mycobacterium tuberculosis complex</taxon>
    </lineage>
</organism>
<name>PCP_MYCBT</name>
<accession>C1AJZ7</accession>
<proteinExistence type="inferred from homology"/>
<gene>
    <name evidence="1" type="primary">pcp</name>
    <name type="ordered locus">JTY_0329</name>
</gene>
<reference key="1">
    <citation type="journal article" date="2009" name="Vaccine">
        <title>Whole genome sequence analysis of Mycobacterium bovis bacillus Calmette-Guerin (BCG) Tokyo 172: a comparative study of BCG vaccine substrains.</title>
        <authorList>
            <person name="Seki M."/>
            <person name="Honda I."/>
            <person name="Fujita I."/>
            <person name="Yano I."/>
            <person name="Yamamoto S."/>
            <person name="Koyama A."/>
        </authorList>
    </citation>
    <scope>NUCLEOTIDE SEQUENCE [LARGE SCALE GENOMIC DNA]</scope>
    <source>
        <strain>BCG / Tokyo 172 / ATCC 35737 / TMC 1019</strain>
    </source>
</reference>